<name>MURC_MARMS</name>
<reference key="1">
    <citation type="submission" date="2007-06" db="EMBL/GenBank/DDBJ databases">
        <title>Complete sequence of Marinomonas sp. MWYL1.</title>
        <authorList>
            <consortium name="US DOE Joint Genome Institute"/>
            <person name="Copeland A."/>
            <person name="Lucas S."/>
            <person name="Lapidus A."/>
            <person name="Barry K."/>
            <person name="Glavina del Rio T."/>
            <person name="Dalin E."/>
            <person name="Tice H."/>
            <person name="Pitluck S."/>
            <person name="Kiss H."/>
            <person name="Brettin T."/>
            <person name="Bruce D."/>
            <person name="Detter J.C."/>
            <person name="Han C."/>
            <person name="Schmutz J."/>
            <person name="Larimer F."/>
            <person name="Land M."/>
            <person name="Hauser L."/>
            <person name="Kyrpides N."/>
            <person name="Kim E."/>
            <person name="Johnston A.W.B."/>
            <person name="Todd J.D."/>
            <person name="Rogers R."/>
            <person name="Wexler M."/>
            <person name="Bond P.L."/>
            <person name="Li Y."/>
            <person name="Richardson P."/>
        </authorList>
    </citation>
    <scope>NUCLEOTIDE SEQUENCE [LARGE SCALE GENOMIC DNA]</scope>
    <source>
        <strain>MWYL1</strain>
    </source>
</reference>
<gene>
    <name evidence="1" type="primary">murC</name>
    <name type="ordered locus">Mmwyl1_2613</name>
</gene>
<proteinExistence type="inferred from homology"/>
<evidence type="ECO:0000255" key="1">
    <source>
        <dbReference type="HAMAP-Rule" id="MF_00046"/>
    </source>
</evidence>
<sequence length="473" mass="51811">MIDIKAQYDIPTMRRIQNIHFIGIGGVGMCGIAEVLHNQGYQVSGSDLKASSTTDRLEELGIKIYLGHLEENVYNAHVIVVSTAINEQNPEIIWGKEHRIPIVRRAEMLAELMRYRHGIAVAGTHGKTTTTSLMASILAATGEAPTFVIGGRLTSAGANAQLGSSAYLVAEADESDASFLHLQPQTVIVTNIDEDHMDTYDGDFEKVKHTFIEFVHNLPFYGLAVLCVDDENVREILPTLSRPVLTYGIDQEADFYATEIVQTGRYCEFLAHRPEGEPLKIRLPMPGRHNVLNALATIAVATDLGVDASAIQAGLMGFEGVGRRFQEQKPLALPNGSNVMFVDDYGHHPSEVLATIKAIRAGWPEKRLVMVYQPHRYTRTRDLYEDFVRVLSQVDVLLLLDVYSAGEAPINGADSRSLCGSIRQRGNVDPIHVGSEADLRSILSNVLREGDLLITQGAGDIGMVSKNLSVSGI</sequence>
<feature type="chain" id="PRO_0000336842" description="UDP-N-acetylmuramate--L-alanine ligase">
    <location>
        <begin position="1"/>
        <end position="473"/>
    </location>
</feature>
<feature type="binding site" evidence="1">
    <location>
        <begin position="123"/>
        <end position="129"/>
    </location>
    <ligand>
        <name>ATP</name>
        <dbReference type="ChEBI" id="CHEBI:30616"/>
    </ligand>
</feature>
<protein>
    <recommendedName>
        <fullName evidence="1">UDP-N-acetylmuramate--L-alanine ligase</fullName>
        <ecNumber evidence="1">6.3.2.8</ecNumber>
    </recommendedName>
    <alternativeName>
        <fullName evidence="1">UDP-N-acetylmuramoyl-L-alanine synthetase</fullName>
    </alternativeName>
</protein>
<organism>
    <name type="scientific">Marinomonas sp. (strain MWYL1)</name>
    <dbReference type="NCBI Taxonomy" id="400668"/>
    <lineage>
        <taxon>Bacteria</taxon>
        <taxon>Pseudomonadati</taxon>
        <taxon>Pseudomonadota</taxon>
        <taxon>Gammaproteobacteria</taxon>
        <taxon>Oceanospirillales</taxon>
        <taxon>Oceanospirillaceae</taxon>
        <taxon>Marinomonas</taxon>
    </lineage>
</organism>
<keyword id="KW-0067">ATP-binding</keyword>
<keyword id="KW-0131">Cell cycle</keyword>
<keyword id="KW-0132">Cell division</keyword>
<keyword id="KW-0133">Cell shape</keyword>
<keyword id="KW-0961">Cell wall biogenesis/degradation</keyword>
<keyword id="KW-0963">Cytoplasm</keyword>
<keyword id="KW-0436">Ligase</keyword>
<keyword id="KW-0547">Nucleotide-binding</keyword>
<keyword id="KW-0573">Peptidoglycan synthesis</keyword>
<accession>A6VYJ7</accession>
<comment type="function">
    <text evidence="1">Cell wall formation.</text>
</comment>
<comment type="catalytic activity">
    <reaction evidence="1">
        <text>UDP-N-acetyl-alpha-D-muramate + L-alanine + ATP = UDP-N-acetyl-alpha-D-muramoyl-L-alanine + ADP + phosphate + H(+)</text>
        <dbReference type="Rhea" id="RHEA:23372"/>
        <dbReference type="ChEBI" id="CHEBI:15378"/>
        <dbReference type="ChEBI" id="CHEBI:30616"/>
        <dbReference type="ChEBI" id="CHEBI:43474"/>
        <dbReference type="ChEBI" id="CHEBI:57972"/>
        <dbReference type="ChEBI" id="CHEBI:70757"/>
        <dbReference type="ChEBI" id="CHEBI:83898"/>
        <dbReference type="ChEBI" id="CHEBI:456216"/>
        <dbReference type="EC" id="6.3.2.8"/>
    </reaction>
</comment>
<comment type="pathway">
    <text evidence="1">Cell wall biogenesis; peptidoglycan biosynthesis.</text>
</comment>
<comment type="subcellular location">
    <subcellularLocation>
        <location evidence="1">Cytoplasm</location>
    </subcellularLocation>
</comment>
<comment type="similarity">
    <text evidence="1">Belongs to the MurCDEF family.</text>
</comment>
<dbReference type="EC" id="6.3.2.8" evidence="1"/>
<dbReference type="EMBL" id="CP000749">
    <property type="protein sequence ID" value="ABR71526.1"/>
    <property type="molecule type" value="Genomic_DNA"/>
</dbReference>
<dbReference type="SMR" id="A6VYJ7"/>
<dbReference type="STRING" id="400668.Mmwyl1_2613"/>
<dbReference type="KEGG" id="mmw:Mmwyl1_2613"/>
<dbReference type="eggNOG" id="COG0773">
    <property type="taxonomic scope" value="Bacteria"/>
</dbReference>
<dbReference type="HOGENOM" id="CLU_028104_2_2_6"/>
<dbReference type="OrthoDB" id="9804126at2"/>
<dbReference type="UniPathway" id="UPA00219"/>
<dbReference type="GO" id="GO:0005737">
    <property type="term" value="C:cytoplasm"/>
    <property type="evidence" value="ECO:0007669"/>
    <property type="project" value="UniProtKB-SubCell"/>
</dbReference>
<dbReference type="GO" id="GO:0005524">
    <property type="term" value="F:ATP binding"/>
    <property type="evidence" value="ECO:0007669"/>
    <property type="project" value="UniProtKB-UniRule"/>
</dbReference>
<dbReference type="GO" id="GO:0008763">
    <property type="term" value="F:UDP-N-acetylmuramate-L-alanine ligase activity"/>
    <property type="evidence" value="ECO:0007669"/>
    <property type="project" value="UniProtKB-UniRule"/>
</dbReference>
<dbReference type="GO" id="GO:0051301">
    <property type="term" value="P:cell division"/>
    <property type="evidence" value="ECO:0007669"/>
    <property type="project" value="UniProtKB-KW"/>
</dbReference>
<dbReference type="GO" id="GO:0071555">
    <property type="term" value="P:cell wall organization"/>
    <property type="evidence" value="ECO:0007669"/>
    <property type="project" value="UniProtKB-KW"/>
</dbReference>
<dbReference type="GO" id="GO:0009252">
    <property type="term" value="P:peptidoglycan biosynthetic process"/>
    <property type="evidence" value="ECO:0007669"/>
    <property type="project" value="UniProtKB-UniRule"/>
</dbReference>
<dbReference type="GO" id="GO:0008360">
    <property type="term" value="P:regulation of cell shape"/>
    <property type="evidence" value="ECO:0007669"/>
    <property type="project" value="UniProtKB-KW"/>
</dbReference>
<dbReference type="FunFam" id="3.40.1190.10:FF:000001">
    <property type="entry name" value="UDP-N-acetylmuramate--L-alanine ligase"/>
    <property type="match status" value="1"/>
</dbReference>
<dbReference type="Gene3D" id="3.90.190.20">
    <property type="entry name" value="Mur ligase, C-terminal domain"/>
    <property type="match status" value="1"/>
</dbReference>
<dbReference type="Gene3D" id="3.40.1190.10">
    <property type="entry name" value="Mur-like, catalytic domain"/>
    <property type="match status" value="1"/>
</dbReference>
<dbReference type="Gene3D" id="3.40.50.720">
    <property type="entry name" value="NAD(P)-binding Rossmann-like Domain"/>
    <property type="match status" value="1"/>
</dbReference>
<dbReference type="HAMAP" id="MF_00046">
    <property type="entry name" value="MurC"/>
    <property type="match status" value="1"/>
</dbReference>
<dbReference type="InterPro" id="IPR036565">
    <property type="entry name" value="Mur-like_cat_sf"/>
</dbReference>
<dbReference type="InterPro" id="IPR004101">
    <property type="entry name" value="Mur_ligase_C"/>
</dbReference>
<dbReference type="InterPro" id="IPR036615">
    <property type="entry name" value="Mur_ligase_C_dom_sf"/>
</dbReference>
<dbReference type="InterPro" id="IPR013221">
    <property type="entry name" value="Mur_ligase_cen"/>
</dbReference>
<dbReference type="InterPro" id="IPR000713">
    <property type="entry name" value="Mur_ligase_N"/>
</dbReference>
<dbReference type="InterPro" id="IPR050061">
    <property type="entry name" value="MurCDEF_pg_biosynth"/>
</dbReference>
<dbReference type="InterPro" id="IPR005758">
    <property type="entry name" value="UDP-N-AcMur_Ala_ligase_MurC"/>
</dbReference>
<dbReference type="NCBIfam" id="TIGR01082">
    <property type="entry name" value="murC"/>
    <property type="match status" value="1"/>
</dbReference>
<dbReference type="PANTHER" id="PTHR43445:SF3">
    <property type="entry name" value="UDP-N-ACETYLMURAMATE--L-ALANINE LIGASE"/>
    <property type="match status" value="1"/>
</dbReference>
<dbReference type="PANTHER" id="PTHR43445">
    <property type="entry name" value="UDP-N-ACETYLMURAMATE--L-ALANINE LIGASE-RELATED"/>
    <property type="match status" value="1"/>
</dbReference>
<dbReference type="Pfam" id="PF01225">
    <property type="entry name" value="Mur_ligase"/>
    <property type="match status" value="1"/>
</dbReference>
<dbReference type="Pfam" id="PF02875">
    <property type="entry name" value="Mur_ligase_C"/>
    <property type="match status" value="1"/>
</dbReference>
<dbReference type="Pfam" id="PF08245">
    <property type="entry name" value="Mur_ligase_M"/>
    <property type="match status" value="1"/>
</dbReference>
<dbReference type="SUPFAM" id="SSF51984">
    <property type="entry name" value="MurCD N-terminal domain"/>
    <property type="match status" value="1"/>
</dbReference>
<dbReference type="SUPFAM" id="SSF53623">
    <property type="entry name" value="MurD-like peptide ligases, catalytic domain"/>
    <property type="match status" value="1"/>
</dbReference>
<dbReference type="SUPFAM" id="SSF53244">
    <property type="entry name" value="MurD-like peptide ligases, peptide-binding domain"/>
    <property type="match status" value="1"/>
</dbReference>